<dbReference type="EC" id="4.1.1.39" evidence="1"/>
<dbReference type="EMBL" id="L01883">
    <property type="protein sequence ID" value="AAA83213.2"/>
    <property type="molecule type" value="Genomic_DNA"/>
</dbReference>
<dbReference type="GO" id="GO:0009507">
    <property type="term" value="C:chloroplast"/>
    <property type="evidence" value="ECO:0007669"/>
    <property type="project" value="UniProtKB-SubCell"/>
</dbReference>
<dbReference type="GO" id="GO:0000287">
    <property type="term" value="F:magnesium ion binding"/>
    <property type="evidence" value="ECO:0007669"/>
    <property type="project" value="InterPro"/>
</dbReference>
<dbReference type="GO" id="GO:0004497">
    <property type="term" value="F:monooxygenase activity"/>
    <property type="evidence" value="ECO:0007669"/>
    <property type="project" value="UniProtKB-KW"/>
</dbReference>
<dbReference type="GO" id="GO:0016984">
    <property type="term" value="F:ribulose-bisphosphate carboxylase activity"/>
    <property type="evidence" value="ECO:0007669"/>
    <property type="project" value="UniProtKB-EC"/>
</dbReference>
<dbReference type="GO" id="GO:0009853">
    <property type="term" value="P:photorespiration"/>
    <property type="evidence" value="ECO:0007669"/>
    <property type="project" value="UniProtKB-KW"/>
</dbReference>
<dbReference type="GO" id="GO:0019253">
    <property type="term" value="P:reductive pentose-phosphate cycle"/>
    <property type="evidence" value="ECO:0007669"/>
    <property type="project" value="UniProtKB-KW"/>
</dbReference>
<dbReference type="CDD" id="cd08212">
    <property type="entry name" value="RuBisCO_large_I"/>
    <property type="match status" value="1"/>
</dbReference>
<dbReference type="FunFam" id="3.20.20.110:FF:000001">
    <property type="entry name" value="Ribulose bisphosphate carboxylase large chain"/>
    <property type="match status" value="1"/>
</dbReference>
<dbReference type="FunFam" id="3.30.70.150:FF:000001">
    <property type="entry name" value="Ribulose bisphosphate carboxylase large chain"/>
    <property type="match status" value="1"/>
</dbReference>
<dbReference type="Gene3D" id="3.20.20.110">
    <property type="entry name" value="Ribulose bisphosphate carboxylase, large subunit, C-terminal domain"/>
    <property type="match status" value="1"/>
</dbReference>
<dbReference type="Gene3D" id="3.30.70.150">
    <property type="entry name" value="RuBisCO large subunit, N-terminal domain"/>
    <property type="match status" value="1"/>
</dbReference>
<dbReference type="HAMAP" id="MF_01338">
    <property type="entry name" value="RuBisCO_L_type1"/>
    <property type="match status" value="1"/>
</dbReference>
<dbReference type="InterPro" id="IPR033966">
    <property type="entry name" value="RuBisCO"/>
</dbReference>
<dbReference type="InterPro" id="IPR020878">
    <property type="entry name" value="RuBisCo_large_chain_AS"/>
</dbReference>
<dbReference type="InterPro" id="IPR000685">
    <property type="entry name" value="RuBisCO_lsu_C"/>
</dbReference>
<dbReference type="InterPro" id="IPR036376">
    <property type="entry name" value="RuBisCO_lsu_C_sf"/>
</dbReference>
<dbReference type="InterPro" id="IPR017443">
    <property type="entry name" value="RuBisCO_lsu_fd_N"/>
</dbReference>
<dbReference type="InterPro" id="IPR036422">
    <property type="entry name" value="RuBisCO_lsu_N_sf"/>
</dbReference>
<dbReference type="InterPro" id="IPR020888">
    <property type="entry name" value="RuBisCO_lsuI"/>
</dbReference>
<dbReference type="NCBIfam" id="NF003252">
    <property type="entry name" value="PRK04208.1"/>
    <property type="match status" value="1"/>
</dbReference>
<dbReference type="PANTHER" id="PTHR42704">
    <property type="entry name" value="RIBULOSE BISPHOSPHATE CARBOXYLASE"/>
    <property type="match status" value="1"/>
</dbReference>
<dbReference type="PANTHER" id="PTHR42704:SF15">
    <property type="entry name" value="RIBULOSE BISPHOSPHATE CARBOXYLASE LARGE CHAIN"/>
    <property type="match status" value="1"/>
</dbReference>
<dbReference type="Pfam" id="PF00016">
    <property type="entry name" value="RuBisCO_large"/>
    <property type="match status" value="1"/>
</dbReference>
<dbReference type="Pfam" id="PF02788">
    <property type="entry name" value="RuBisCO_large_N"/>
    <property type="match status" value="1"/>
</dbReference>
<dbReference type="SFLD" id="SFLDG01052">
    <property type="entry name" value="RuBisCO"/>
    <property type="match status" value="1"/>
</dbReference>
<dbReference type="SFLD" id="SFLDS00014">
    <property type="entry name" value="RuBisCO"/>
    <property type="match status" value="1"/>
</dbReference>
<dbReference type="SFLD" id="SFLDG00301">
    <property type="entry name" value="RuBisCO-like_proteins"/>
    <property type="match status" value="1"/>
</dbReference>
<dbReference type="SUPFAM" id="SSF51649">
    <property type="entry name" value="RuBisCo, C-terminal domain"/>
    <property type="match status" value="1"/>
</dbReference>
<dbReference type="SUPFAM" id="SSF54966">
    <property type="entry name" value="RuBisCO, large subunit, small (N-terminal) domain"/>
    <property type="match status" value="1"/>
</dbReference>
<dbReference type="PROSITE" id="PS00157">
    <property type="entry name" value="RUBISCO_LARGE"/>
    <property type="match status" value="1"/>
</dbReference>
<feature type="chain" id="PRO_0000062342" description="Ribulose bisphosphate carboxylase large chain">
    <location>
        <begin position="1" status="less than"/>
        <end position="466"/>
    </location>
</feature>
<feature type="active site" description="Proton acceptor" evidence="1">
    <location>
        <position position="166"/>
    </location>
</feature>
<feature type="active site" description="Proton acceptor" evidence="1">
    <location>
        <position position="285"/>
    </location>
</feature>
<feature type="binding site" description="in homodimeric partner" evidence="1">
    <location>
        <position position="114"/>
    </location>
    <ligand>
        <name>substrate</name>
    </ligand>
</feature>
<feature type="binding site" evidence="1">
    <location>
        <position position="164"/>
    </location>
    <ligand>
        <name>substrate</name>
    </ligand>
</feature>
<feature type="binding site" evidence="1">
    <location>
        <position position="168"/>
    </location>
    <ligand>
        <name>substrate</name>
    </ligand>
</feature>
<feature type="binding site" description="via carbamate group" evidence="1">
    <location>
        <position position="192"/>
    </location>
    <ligand>
        <name>Mg(2+)</name>
        <dbReference type="ChEBI" id="CHEBI:18420"/>
    </ligand>
</feature>
<feature type="binding site" evidence="1">
    <location>
        <position position="194"/>
    </location>
    <ligand>
        <name>Mg(2+)</name>
        <dbReference type="ChEBI" id="CHEBI:18420"/>
    </ligand>
</feature>
<feature type="binding site" evidence="1">
    <location>
        <position position="195"/>
    </location>
    <ligand>
        <name>Mg(2+)</name>
        <dbReference type="ChEBI" id="CHEBI:18420"/>
    </ligand>
</feature>
<feature type="binding site" evidence="1">
    <location>
        <position position="286"/>
    </location>
    <ligand>
        <name>substrate</name>
    </ligand>
</feature>
<feature type="binding site" evidence="1">
    <location>
        <position position="318"/>
    </location>
    <ligand>
        <name>substrate</name>
    </ligand>
</feature>
<feature type="binding site" evidence="1">
    <location>
        <position position="370"/>
    </location>
    <ligand>
        <name>substrate</name>
    </ligand>
</feature>
<feature type="site" description="Transition state stabilizer" evidence="1">
    <location>
        <position position="325"/>
    </location>
</feature>
<feature type="modified residue" description="N6,N6,N6-trimethyllysine" evidence="1">
    <location>
        <position position="5"/>
    </location>
</feature>
<feature type="modified residue" description="N6-carboxylysine" evidence="1">
    <location>
        <position position="192"/>
    </location>
</feature>
<feature type="disulfide bond" description="Interchain; in linked form" evidence="1">
    <location>
        <position position="238"/>
    </location>
</feature>
<feature type="non-terminal residue">
    <location>
        <position position="1"/>
    </location>
</feature>
<organism>
    <name type="scientific">Adoxa moschatellina</name>
    <name type="common">Moschatel</name>
    <dbReference type="NCBI Taxonomy" id="4208"/>
    <lineage>
        <taxon>Eukaryota</taxon>
        <taxon>Viridiplantae</taxon>
        <taxon>Streptophyta</taxon>
        <taxon>Embryophyta</taxon>
        <taxon>Tracheophyta</taxon>
        <taxon>Spermatophyta</taxon>
        <taxon>Magnoliopsida</taxon>
        <taxon>eudicotyledons</taxon>
        <taxon>Gunneridae</taxon>
        <taxon>Pentapetalae</taxon>
        <taxon>asterids</taxon>
        <taxon>campanulids</taxon>
        <taxon>Dipsacales</taxon>
        <taxon>Adoxaceae</taxon>
        <taxon>Adoxa</taxon>
    </lineage>
</organism>
<protein>
    <recommendedName>
        <fullName evidence="1">Ribulose bisphosphate carboxylase large chain</fullName>
        <shortName evidence="1">RuBisCO large subunit</shortName>
        <ecNumber evidence="1">4.1.1.39</ecNumber>
    </recommendedName>
</protein>
<name>RBL_ADOMO</name>
<evidence type="ECO:0000255" key="1">
    <source>
        <dbReference type="HAMAP-Rule" id="MF_01338"/>
    </source>
</evidence>
<gene>
    <name evidence="1" type="primary">rbcL</name>
</gene>
<accession>P28378</accession>
<proteinExistence type="inferred from homology"/>
<keyword id="KW-0113">Calvin cycle</keyword>
<keyword id="KW-0120">Carbon dioxide fixation</keyword>
<keyword id="KW-0150">Chloroplast</keyword>
<keyword id="KW-1015">Disulfide bond</keyword>
<keyword id="KW-0456">Lyase</keyword>
<keyword id="KW-0460">Magnesium</keyword>
<keyword id="KW-0479">Metal-binding</keyword>
<keyword id="KW-0488">Methylation</keyword>
<keyword id="KW-0503">Monooxygenase</keyword>
<keyword id="KW-0560">Oxidoreductase</keyword>
<keyword id="KW-0601">Photorespiration</keyword>
<keyword id="KW-0602">Photosynthesis</keyword>
<keyword id="KW-0934">Plastid</keyword>
<comment type="function">
    <text evidence="1">RuBisCO catalyzes two reactions: the carboxylation of D-ribulose 1,5-bisphosphate, the primary event in carbon dioxide fixation, as well as the oxidative fragmentation of the pentose substrate in the photorespiration process. Both reactions occur simultaneously and in competition at the same active site.</text>
</comment>
<comment type="catalytic activity">
    <reaction evidence="1">
        <text>2 (2R)-3-phosphoglycerate + 2 H(+) = D-ribulose 1,5-bisphosphate + CO2 + H2O</text>
        <dbReference type="Rhea" id="RHEA:23124"/>
        <dbReference type="ChEBI" id="CHEBI:15377"/>
        <dbReference type="ChEBI" id="CHEBI:15378"/>
        <dbReference type="ChEBI" id="CHEBI:16526"/>
        <dbReference type="ChEBI" id="CHEBI:57870"/>
        <dbReference type="ChEBI" id="CHEBI:58272"/>
        <dbReference type="EC" id="4.1.1.39"/>
    </reaction>
</comment>
<comment type="catalytic activity">
    <reaction evidence="1">
        <text>D-ribulose 1,5-bisphosphate + O2 = 2-phosphoglycolate + (2R)-3-phosphoglycerate + 2 H(+)</text>
        <dbReference type="Rhea" id="RHEA:36631"/>
        <dbReference type="ChEBI" id="CHEBI:15378"/>
        <dbReference type="ChEBI" id="CHEBI:15379"/>
        <dbReference type="ChEBI" id="CHEBI:57870"/>
        <dbReference type="ChEBI" id="CHEBI:58033"/>
        <dbReference type="ChEBI" id="CHEBI:58272"/>
    </reaction>
</comment>
<comment type="cofactor">
    <cofactor evidence="1">
        <name>Mg(2+)</name>
        <dbReference type="ChEBI" id="CHEBI:18420"/>
    </cofactor>
    <text evidence="1">Binds 1 Mg(2+) ion per subunit.</text>
</comment>
<comment type="subunit">
    <text evidence="1">Heterohexadecamer of 8 large chains and 8 small chains; disulfide-linked. The disulfide link is formed within the large subunit homodimers.</text>
</comment>
<comment type="subcellular location">
    <subcellularLocation>
        <location>Plastid</location>
        <location>Chloroplast</location>
    </subcellularLocation>
</comment>
<comment type="PTM">
    <text evidence="1">The disulfide bond which can form in the large chain dimeric partners within the hexadecamer appears to be associated with oxidative stress and protein turnover.</text>
</comment>
<comment type="miscellaneous">
    <text evidence="1">The basic functional RuBisCO is composed of a large chain homodimer in a 'head-to-tail' conformation. In form I RuBisCO this homodimer is arranged in a barrel-like tetramer with the small subunits forming a tetrameric 'cap' on each end of the 'barrel'.</text>
</comment>
<comment type="similarity">
    <text evidence="1">Belongs to the RuBisCO large chain family. Type I subfamily.</text>
</comment>
<reference key="1">
    <citation type="journal article" date="1992" name="Science">
        <title>Carnivorous plants: phylogeny and structural evolution.</title>
        <authorList>
            <person name="Albert V.A."/>
            <person name="Williams S.E."/>
            <person name="Chase M.W."/>
        </authorList>
    </citation>
    <scope>NUCLEOTIDE SEQUENCE [GENOMIC DNA]</scope>
</reference>
<geneLocation type="chloroplast"/>
<sequence>SAGFKAGVKDYKLTYYTPDYETKDTDILAAFRVTPQPGVPPEEAGAAVAAESSTGTWTTVWTDGLTNLDRYKGRCYHIEPVAGEETQFIAYVAYPLDLFEEGSVTNMFTSIVGNVFGFKALRALRLEDLRIPVAYVKTFQGPPHGIQVERDKLNKYGRPLLGCTIKPKLGLSAKNYGRAVYECLRGGLDFTKDDENVNSQPFMRWRDRFLFCAEALYKAQAETGEIKGHYLNATAGTCEEMMKRAIFARELGVPIVMHDYLTGGFTANTTLAHYCRDNGLLLHIHRAMHAVIDRQKNHGIHFRVLAKALRMSGGDHIHSGTVVGKLEGEREITLGFVDLLRDDFIEKDRSRGIYFTQDWVSLPGVLPVASGGIHVWHMPALTEIFGDDSVLQFGGGTLGHPWGNAPGAVANRVALEACVQARNEGRXXAREGNEIIREASKWSPELAAACEVWKEIKFEFEAMDTL</sequence>